<accession>Q9A9E4</accession>
<comment type="catalytic activity">
    <reaction evidence="1">
        <text>tRNA(Phe) + L-phenylalanine + ATP = L-phenylalanyl-tRNA(Phe) + AMP + diphosphate + H(+)</text>
        <dbReference type="Rhea" id="RHEA:19413"/>
        <dbReference type="Rhea" id="RHEA-COMP:9668"/>
        <dbReference type="Rhea" id="RHEA-COMP:9699"/>
        <dbReference type="ChEBI" id="CHEBI:15378"/>
        <dbReference type="ChEBI" id="CHEBI:30616"/>
        <dbReference type="ChEBI" id="CHEBI:33019"/>
        <dbReference type="ChEBI" id="CHEBI:58095"/>
        <dbReference type="ChEBI" id="CHEBI:78442"/>
        <dbReference type="ChEBI" id="CHEBI:78531"/>
        <dbReference type="ChEBI" id="CHEBI:456215"/>
        <dbReference type="EC" id="6.1.1.20"/>
    </reaction>
</comment>
<comment type="cofactor">
    <cofactor evidence="1">
        <name>Mg(2+)</name>
        <dbReference type="ChEBI" id="CHEBI:18420"/>
    </cofactor>
    <text evidence="1">Binds 2 magnesium ions per tetramer.</text>
</comment>
<comment type="subunit">
    <text evidence="1">Tetramer of two alpha and two beta subunits.</text>
</comment>
<comment type="subcellular location">
    <subcellularLocation>
        <location evidence="1">Cytoplasm</location>
    </subcellularLocation>
</comment>
<comment type="similarity">
    <text evidence="1">Belongs to the class-II aminoacyl-tRNA synthetase family. Phe-tRNA synthetase alpha subunit type 1 subfamily.</text>
</comment>
<sequence>MTDLNTLEADVLAQVAAASDLQALDAVRVAAVGKTGSISGLLKTLGAMSPEERKTQGAAINALRDKVQDAITQKKAALEAAELDARLASETLDLSLPAPYRRKGSVHPTMQTMDEVVAIFAEMGFAVAEGPDIEDDFHNFTALNFPEKHPAREMHDTFFFNPKEDGERMLLRTHTSPVQVRTMVSQKPPIRIIAPGRTYRCDNDATHTPVFHQVEGLVIDKGIHMGHLKWTLETFLARFFETDAVTTQFRPHHFPFTEPSAEMDVQCDRSGGEIKIGQGTSWLEILGCGMVHPNVLRACGIDPDEYQGFAFGMGVDRLGMLKYGMPDLRDMWSSDVRWLSHYGFSAFAAPNPASGLS</sequence>
<organism>
    <name type="scientific">Caulobacter vibrioides (strain ATCC 19089 / CIP 103742 / CB 15)</name>
    <name type="common">Caulobacter crescentus</name>
    <dbReference type="NCBI Taxonomy" id="190650"/>
    <lineage>
        <taxon>Bacteria</taxon>
        <taxon>Pseudomonadati</taxon>
        <taxon>Pseudomonadota</taxon>
        <taxon>Alphaproteobacteria</taxon>
        <taxon>Caulobacterales</taxon>
        <taxon>Caulobacteraceae</taxon>
        <taxon>Caulobacter</taxon>
    </lineage>
</organism>
<name>SYFA_CAUVC</name>
<keyword id="KW-0030">Aminoacyl-tRNA synthetase</keyword>
<keyword id="KW-0067">ATP-binding</keyword>
<keyword id="KW-0963">Cytoplasm</keyword>
<keyword id="KW-0436">Ligase</keyword>
<keyword id="KW-0460">Magnesium</keyword>
<keyword id="KW-0479">Metal-binding</keyword>
<keyword id="KW-0547">Nucleotide-binding</keyword>
<keyword id="KW-0648">Protein biosynthesis</keyword>
<keyword id="KW-1185">Reference proteome</keyword>
<proteinExistence type="inferred from homology"/>
<dbReference type="EC" id="6.1.1.20" evidence="1"/>
<dbReference type="EMBL" id="AE005673">
    <property type="protein sequence ID" value="AAK23028.1"/>
    <property type="molecule type" value="Genomic_DNA"/>
</dbReference>
<dbReference type="PIR" id="H87378">
    <property type="entry name" value="H87378"/>
</dbReference>
<dbReference type="RefSeq" id="NP_419860.1">
    <property type="nucleotide sequence ID" value="NC_002696.2"/>
</dbReference>
<dbReference type="RefSeq" id="WP_010918928.1">
    <property type="nucleotide sequence ID" value="NC_002696.2"/>
</dbReference>
<dbReference type="SMR" id="Q9A9E4"/>
<dbReference type="STRING" id="190650.CC_1044"/>
<dbReference type="EnsemblBacteria" id="AAK23028">
    <property type="protein sequence ID" value="AAK23028"/>
    <property type="gene ID" value="CC_1044"/>
</dbReference>
<dbReference type="KEGG" id="ccr:CC_1044"/>
<dbReference type="PATRIC" id="fig|190650.5.peg.1061"/>
<dbReference type="eggNOG" id="COG0016">
    <property type="taxonomic scope" value="Bacteria"/>
</dbReference>
<dbReference type="HOGENOM" id="CLU_025086_0_1_5"/>
<dbReference type="BioCyc" id="CAULO:CC1044-MONOMER"/>
<dbReference type="Proteomes" id="UP000001816">
    <property type="component" value="Chromosome"/>
</dbReference>
<dbReference type="GO" id="GO:0005737">
    <property type="term" value="C:cytoplasm"/>
    <property type="evidence" value="ECO:0007669"/>
    <property type="project" value="UniProtKB-SubCell"/>
</dbReference>
<dbReference type="GO" id="GO:0005524">
    <property type="term" value="F:ATP binding"/>
    <property type="evidence" value="ECO:0007669"/>
    <property type="project" value="UniProtKB-UniRule"/>
</dbReference>
<dbReference type="GO" id="GO:0000287">
    <property type="term" value="F:magnesium ion binding"/>
    <property type="evidence" value="ECO:0007669"/>
    <property type="project" value="UniProtKB-UniRule"/>
</dbReference>
<dbReference type="GO" id="GO:0004826">
    <property type="term" value="F:phenylalanine-tRNA ligase activity"/>
    <property type="evidence" value="ECO:0007669"/>
    <property type="project" value="UniProtKB-UniRule"/>
</dbReference>
<dbReference type="GO" id="GO:0000049">
    <property type="term" value="F:tRNA binding"/>
    <property type="evidence" value="ECO:0007669"/>
    <property type="project" value="InterPro"/>
</dbReference>
<dbReference type="GO" id="GO:0006432">
    <property type="term" value="P:phenylalanyl-tRNA aminoacylation"/>
    <property type="evidence" value="ECO:0007669"/>
    <property type="project" value="UniProtKB-UniRule"/>
</dbReference>
<dbReference type="CDD" id="cd00496">
    <property type="entry name" value="PheRS_alpha_core"/>
    <property type="match status" value="1"/>
</dbReference>
<dbReference type="FunFam" id="3.30.930.10:FF:000003">
    <property type="entry name" value="Phenylalanine--tRNA ligase alpha subunit"/>
    <property type="match status" value="1"/>
</dbReference>
<dbReference type="Gene3D" id="3.30.930.10">
    <property type="entry name" value="Bira Bifunctional Protein, Domain 2"/>
    <property type="match status" value="1"/>
</dbReference>
<dbReference type="HAMAP" id="MF_00281">
    <property type="entry name" value="Phe_tRNA_synth_alpha1"/>
    <property type="match status" value="1"/>
</dbReference>
<dbReference type="InterPro" id="IPR006195">
    <property type="entry name" value="aa-tRNA-synth_II"/>
</dbReference>
<dbReference type="InterPro" id="IPR045864">
    <property type="entry name" value="aa-tRNA-synth_II/BPL/LPL"/>
</dbReference>
<dbReference type="InterPro" id="IPR004529">
    <property type="entry name" value="Phe-tRNA-synth_IIc_asu"/>
</dbReference>
<dbReference type="InterPro" id="IPR004188">
    <property type="entry name" value="Phe-tRNA_ligase_II_N"/>
</dbReference>
<dbReference type="InterPro" id="IPR022911">
    <property type="entry name" value="Phe_tRNA_ligase_alpha1_bac"/>
</dbReference>
<dbReference type="InterPro" id="IPR002319">
    <property type="entry name" value="Phenylalanyl-tRNA_Synthase"/>
</dbReference>
<dbReference type="InterPro" id="IPR010978">
    <property type="entry name" value="tRNA-bd_arm"/>
</dbReference>
<dbReference type="NCBIfam" id="TIGR00468">
    <property type="entry name" value="pheS"/>
    <property type="match status" value="1"/>
</dbReference>
<dbReference type="PANTHER" id="PTHR11538:SF41">
    <property type="entry name" value="PHENYLALANINE--TRNA LIGASE, MITOCHONDRIAL"/>
    <property type="match status" value="1"/>
</dbReference>
<dbReference type="PANTHER" id="PTHR11538">
    <property type="entry name" value="PHENYLALANYL-TRNA SYNTHETASE"/>
    <property type="match status" value="1"/>
</dbReference>
<dbReference type="Pfam" id="PF02912">
    <property type="entry name" value="Phe_tRNA-synt_N"/>
    <property type="match status" value="1"/>
</dbReference>
<dbReference type="Pfam" id="PF01409">
    <property type="entry name" value="tRNA-synt_2d"/>
    <property type="match status" value="1"/>
</dbReference>
<dbReference type="SUPFAM" id="SSF55681">
    <property type="entry name" value="Class II aaRS and biotin synthetases"/>
    <property type="match status" value="1"/>
</dbReference>
<dbReference type="SUPFAM" id="SSF46589">
    <property type="entry name" value="tRNA-binding arm"/>
    <property type="match status" value="1"/>
</dbReference>
<dbReference type="PROSITE" id="PS50862">
    <property type="entry name" value="AA_TRNA_LIGASE_II"/>
    <property type="match status" value="1"/>
</dbReference>
<reference key="1">
    <citation type="journal article" date="2001" name="Proc. Natl. Acad. Sci. U.S.A.">
        <title>Complete genome sequence of Caulobacter crescentus.</title>
        <authorList>
            <person name="Nierman W.C."/>
            <person name="Feldblyum T.V."/>
            <person name="Laub M.T."/>
            <person name="Paulsen I.T."/>
            <person name="Nelson K.E."/>
            <person name="Eisen J.A."/>
            <person name="Heidelberg J.F."/>
            <person name="Alley M.R.K."/>
            <person name="Ohta N."/>
            <person name="Maddock J.R."/>
            <person name="Potocka I."/>
            <person name="Nelson W.C."/>
            <person name="Newton A."/>
            <person name="Stephens C."/>
            <person name="Phadke N.D."/>
            <person name="Ely B."/>
            <person name="DeBoy R.T."/>
            <person name="Dodson R.J."/>
            <person name="Durkin A.S."/>
            <person name="Gwinn M.L."/>
            <person name="Haft D.H."/>
            <person name="Kolonay J.F."/>
            <person name="Smit J."/>
            <person name="Craven M.B."/>
            <person name="Khouri H.M."/>
            <person name="Shetty J."/>
            <person name="Berry K.J."/>
            <person name="Utterback T.R."/>
            <person name="Tran K."/>
            <person name="Wolf A.M."/>
            <person name="Vamathevan J.J."/>
            <person name="Ermolaeva M.D."/>
            <person name="White O."/>
            <person name="Salzberg S.L."/>
            <person name="Venter J.C."/>
            <person name="Shapiro L."/>
            <person name="Fraser C.M."/>
        </authorList>
    </citation>
    <scope>NUCLEOTIDE SEQUENCE [LARGE SCALE GENOMIC DNA]</scope>
    <source>
        <strain>ATCC 19089 / CIP 103742 / CB 15</strain>
    </source>
</reference>
<gene>
    <name evidence="1" type="primary">pheS</name>
    <name type="ordered locus">CC_1044</name>
</gene>
<evidence type="ECO:0000255" key="1">
    <source>
        <dbReference type="HAMAP-Rule" id="MF_00281"/>
    </source>
</evidence>
<feature type="chain" id="PRO_0000126684" description="Phenylalanine--tRNA ligase alpha subunit">
    <location>
        <begin position="1"/>
        <end position="357"/>
    </location>
</feature>
<feature type="binding site" evidence="1">
    <location>
        <position position="258"/>
    </location>
    <ligand>
        <name>Mg(2+)</name>
        <dbReference type="ChEBI" id="CHEBI:18420"/>
        <note>shared with beta subunit</note>
    </ligand>
</feature>
<protein>
    <recommendedName>
        <fullName evidence="1">Phenylalanine--tRNA ligase alpha subunit</fullName>
        <ecNumber evidence="1">6.1.1.20</ecNumber>
    </recommendedName>
    <alternativeName>
        <fullName evidence="1">Phenylalanyl-tRNA synthetase alpha subunit</fullName>
        <shortName evidence="1">PheRS</shortName>
    </alternativeName>
</protein>